<comment type="function">
    <text evidence="1">Functions as an adapter recruiting ubiquitin-protein ligases to their specific substrates. Plays a role in endocytosis of activated G protein-coupled receptors (GPCRs) Through an ubiquitination-dependent mechanism also plays a role in the incorporation of SLC11A2 into extracellular vesicles. May play a role in glucose uptake. Participates in innate immune response by promoting IFIH1/MDA5 activation through interaction with TRIM65.</text>
</comment>
<comment type="subunit">
    <text evidence="1 2">Interacts with ADRB2. Interacts (via PPxY motifs) with ITCH, NEDD4L and WWP2. Interacts with AVPR2. Identified in a complex containing at least ARRDC4, AVPR2 and HGS. Interacts with SLC11A2; controls the incorporation of SLC11A2 into extracellular vesicles through an ubiquitination-dependent mechanism. Interacts with TRIM65.</text>
</comment>
<comment type="subcellular location">
    <subcellularLocation>
        <location evidence="2">Early endosome</location>
    </subcellularLocation>
    <subcellularLocation>
        <location evidence="2">Cell membrane</location>
        <topology evidence="2">Peripheral membrane protein</topology>
        <orientation evidence="2">Cytoplasmic side</orientation>
    </subcellularLocation>
    <subcellularLocation>
        <location evidence="2">Cytoplasmic vesicle</location>
    </subcellularLocation>
    <text evidence="1">Also found in extracellular vesicles different from exosomes.</text>
</comment>
<comment type="similarity">
    <text evidence="3">Belongs to the arrestin family.</text>
</comment>
<name>ARRD4_RAT</name>
<proteinExistence type="evidence at transcript level"/>
<reference key="1">
    <citation type="submission" date="2004-02" db="EMBL/GenBank/DDBJ databases">
        <title>Liver regeneration after PH.</title>
        <authorList>
            <person name="Xu C.S."/>
            <person name="Zhang L."/>
            <person name="Chang C.F."/>
            <person name="Han H.P."/>
            <person name="Wang G.P."/>
            <person name="Chai L.Q."/>
            <person name="Yuan J.Y."/>
            <person name="Yang K.J."/>
            <person name="Zhao L.F."/>
            <person name="Ma H."/>
            <person name="Wang L."/>
            <person name="Wang S.F."/>
            <person name="Xing X.K."/>
            <person name="Shen G.M."/>
            <person name="Shi J.B."/>
            <person name="Rahman S."/>
            <person name="Wang Q.N."/>
            <person name="Zhang J.B."/>
        </authorList>
    </citation>
    <scope>NUCLEOTIDE SEQUENCE [LARGE SCALE MRNA]</scope>
    <source>
        <tissue>Liver</tissue>
    </source>
</reference>
<feature type="chain" id="PRO_0000244354" description="Arrestin domain-containing protein 4">
    <location>
        <begin position="1"/>
        <end position="300"/>
    </location>
</feature>
<feature type="short sequence motif" description="PPxY motif 1" evidence="3">
    <location>
        <begin position="231"/>
        <end position="234"/>
    </location>
</feature>
<feature type="short sequence motif" description="PPxY motif 2" evidence="3">
    <location>
        <begin position="276"/>
        <end position="279"/>
    </location>
</feature>
<keyword id="KW-1003">Cell membrane</keyword>
<keyword id="KW-0968">Cytoplasmic vesicle</keyword>
<keyword id="KW-0967">Endosome</keyword>
<keyword id="KW-0472">Membrane</keyword>
<keyword id="KW-1185">Reference proteome</keyword>
<keyword id="KW-0677">Repeat</keyword>
<accession>Q7TP90</accession>
<gene>
    <name type="primary">Arrdc4</name>
    <name type="ORF">Ab1-209</name>
</gene>
<sequence>MSSQSSILVDFRPLATSFTGKYGSIQYCVRAVLERPQVPDQSVRRELQVVSHVDVNTPPLLTPMLKTQEKMVGCWLFTSGPVSLSVKIERKGYCNGEAIPIYAEIENCSSRLVVPKAAIFQTQTYLASGKTKTVRHMVANVRGNHIGSGSTDTWNGKMLKIPPVTPSILDCCIIRVYIHIPGAKKLMLELPLVIGTIPYSGFGRRNSSMASQFSMDMCWLALALPEQPEAPPNYADVVSEEEFSRHIPPYPQPSACDGEACYSMFACIQEFRFQPPPLYSESHAQLFCLQPVGPTNRAHF</sequence>
<dbReference type="EMBL" id="AY325151">
    <property type="protein sequence ID" value="AAP92552.1"/>
    <property type="molecule type" value="mRNA"/>
</dbReference>
<dbReference type="EMBL" id="AY539868">
    <property type="protein sequence ID" value="AAS66208.1"/>
    <property type="molecule type" value="mRNA"/>
</dbReference>
<dbReference type="RefSeq" id="NP_001041318.1">
    <property type="nucleotide sequence ID" value="NM_001047853.1"/>
</dbReference>
<dbReference type="SMR" id="Q7TP90"/>
<dbReference type="FunCoup" id="Q7TP90">
    <property type="interactions" value="210"/>
</dbReference>
<dbReference type="STRING" id="10116.ENSRNOP00000073183"/>
<dbReference type="PaxDb" id="10116-ENSRNOP00000045721"/>
<dbReference type="AGR" id="RGD:1311763"/>
<dbReference type="RGD" id="1311763">
    <property type="gene designation" value="Arrdc4"/>
</dbReference>
<dbReference type="eggNOG" id="KOG3780">
    <property type="taxonomic scope" value="Eukaryota"/>
</dbReference>
<dbReference type="HOGENOM" id="CLU_039221_1_0_1"/>
<dbReference type="InParanoid" id="Q7TP90"/>
<dbReference type="PRO" id="PR:Q7TP90"/>
<dbReference type="Proteomes" id="UP000002494">
    <property type="component" value="Chromosome 1"/>
</dbReference>
<dbReference type="Bgee" id="ENSRNOG00000010775">
    <property type="expression patterns" value="Expressed in esophagus and 19 other cell types or tissues"/>
</dbReference>
<dbReference type="ExpressionAtlas" id="Q7TP90">
    <property type="expression patterns" value="baseline and differential"/>
</dbReference>
<dbReference type="GO" id="GO:0005769">
    <property type="term" value="C:early endosome"/>
    <property type="evidence" value="ECO:0007669"/>
    <property type="project" value="UniProtKB-SubCell"/>
</dbReference>
<dbReference type="GO" id="GO:0005768">
    <property type="term" value="C:endosome"/>
    <property type="evidence" value="ECO:0000266"/>
    <property type="project" value="RGD"/>
</dbReference>
<dbReference type="GO" id="GO:1903561">
    <property type="term" value="C:extracellular vesicle"/>
    <property type="evidence" value="ECO:0000250"/>
    <property type="project" value="UniProtKB"/>
</dbReference>
<dbReference type="GO" id="GO:0005886">
    <property type="term" value="C:plasma membrane"/>
    <property type="evidence" value="ECO:0000250"/>
    <property type="project" value="UniProtKB"/>
</dbReference>
<dbReference type="GO" id="GO:1990756">
    <property type="term" value="F:ubiquitin-like ligase-substrate adaptor activity"/>
    <property type="evidence" value="ECO:0000250"/>
    <property type="project" value="UniProtKB"/>
</dbReference>
<dbReference type="GO" id="GO:0140112">
    <property type="term" value="P:extracellular vesicle biogenesis"/>
    <property type="evidence" value="ECO:0000250"/>
    <property type="project" value="UniProtKB"/>
</dbReference>
<dbReference type="GO" id="GO:0032728">
    <property type="term" value="P:positive regulation of interferon-beta production"/>
    <property type="evidence" value="ECO:0000266"/>
    <property type="project" value="RGD"/>
</dbReference>
<dbReference type="GO" id="GO:0070534">
    <property type="term" value="P:protein K63-linked ubiquitination"/>
    <property type="evidence" value="ECO:0000266"/>
    <property type="project" value="RGD"/>
</dbReference>
<dbReference type="GO" id="GO:0015031">
    <property type="term" value="P:protein transport"/>
    <property type="evidence" value="ECO:0000250"/>
    <property type="project" value="UniProtKB"/>
</dbReference>
<dbReference type="GO" id="GO:0016567">
    <property type="term" value="P:protein ubiquitination"/>
    <property type="evidence" value="ECO:0000250"/>
    <property type="project" value="UniProtKB"/>
</dbReference>
<dbReference type="Gene3D" id="2.60.40.640">
    <property type="match status" value="2"/>
</dbReference>
<dbReference type="InterPro" id="IPR014752">
    <property type="entry name" value="Arrestin-like_C"/>
</dbReference>
<dbReference type="InterPro" id="IPR011021">
    <property type="entry name" value="Arrestin-like_N"/>
</dbReference>
<dbReference type="InterPro" id="IPR011022">
    <property type="entry name" value="Arrestin_C-like"/>
</dbReference>
<dbReference type="InterPro" id="IPR050357">
    <property type="entry name" value="Arrestin_domain-protein"/>
</dbReference>
<dbReference type="InterPro" id="IPR014756">
    <property type="entry name" value="Ig_E-set"/>
</dbReference>
<dbReference type="PANTHER" id="PTHR11188">
    <property type="entry name" value="ARRESTIN DOMAIN CONTAINING PROTEIN"/>
    <property type="match status" value="1"/>
</dbReference>
<dbReference type="PANTHER" id="PTHR11188:SF16">
    <property type="entry name" value="ARRESTIN DOMAIN-CONTAINING PROTEIN 4"/>
    <property type="match status" value="1"/>
</dbReference>
<dbReference type="Pfam" id="PF02752">
    <property type="entry name" value="Arrestin_C"/>
    <property type="match status" value="1"/>
</dbReference>
<dbReference type="Pfam" id="PF00339">
    <property type="entry name" value="Arrestin_N"/>
    <property type="match status" value="1"/>
</dbReference>
<dbReference type="SMART" id="SM01017">
    <property type="entry name" value="Arrestin_C"/>
    <property type="match status" value="1"/>
</dbReference>
<dbReference type="SUPFAM" id="SSF81296">
    <property type="entry name" value="E set domains"/>
    <property type="match status" value="2"/>
</dbReference>
<evidence type="ECO:0000250" key="1">
    <source>
        <dbReference type="UniProtKB" id="A0A0B4J1F4"/>
    </source>
</evidence>
<evidence type="ECO:0000250" key="2">
    <source>
        <dbReference type="UniProtKB" id="Q8NCT1"/>
    </source>
</evidence>
<evidence type="ECO:0000305" key="3"/>
<organism>
    <name type="scientific">Rattus norvegicus</name>
    <name type="common">Rat</name>
    <dbReference type="NCBI Taxonomy" id="10116"/>
    <lineage>
        <taxon>Eukaryota</taxon>
        <taxon>Metazoa</taxon>
        <taxon>Chordata</taxon>
        <taxon>Craniata</taxon>
        <taxon>Vertebrata</taxon>
        <taxon>Euteleostomi</taxon>
        <taxon>Mammalia</taxon>
        <taxon>Eutheria</taxon>
        <taxon>Euarchontoglires</taxon>
        <taxon>Glires</taxon>
        <taxon>Rodentia</taxon>
        <taxon>Myomorpha</taxon>
        <taxon>Muroidea</taxon>
        <taxon>Muridae</taxon>
        <taxon>Murinae</taxon>
        <taxon>Rattus</taxon>
    </lineage>
</organism>
<protein>
    <recommendedName>
        <fullName>Arrestin domain-containing protein 4</fullName>
    </recommendedName>
    <alternativeName>
        <fullName>Liver regeneration-related protein LRRG041/LRRGT00117</fullName>
    </alternativeName>
</protein>